<evidence type="ECO:0000250" key="1">
    <source>
        <dbReference type="UniProtKB" id="Q47149"/>
    </source>
</evidence>
<evidence type="ECO:0000303" key="2">
    <source>
    </source>
</evidence>
<evidence type="ECO:0000305" key="3"/>
<accession>P44041</accession>
<keyword id="KW-1185">Reference proteome</keyword>
<keyword id="KW-1277">Toxin-antitoxin system</keyword>
<feature type="chain" id="PRO_0000168541" description="Putative toxin YafQ">
    <location>
        <begin position="1"/>
        <end position="102"/>
    </location>
</feature>
<dbReference type="EMBL" id="L42023">
    <property type="protein sequence ID" value="AAC22368.1"/>
    <property type="molecule type" value="Genomic_DNA"/>
</dbReference>
<dbReference type="PIR" id="E64012">
    <property type="entry name" value="E64012"/>
</dbReference>
<dbReference type="RefSeq" id="NP_438869.1">
    <property type="nucleotide sequence ID" value="NC_000907.1"/>
</dbReference>
<dbReference type="SMR" id="P44041"/>
<dbReference type="STRING" id="71421.HI_0711"/>
<dbReference type="EnsemblBacteria" id="AAC22368">
    <property type="protein sequence ID" value="AAC22368"/>
    <property type="gene ID" value="HI_0711"/>
</dbReference>
<dbReference type="KEGG" id="hin:HI_0711"/>
<dbReference type="PATRIC" id="fig|71421.8.peg.742"/>
<dbReference type="eggNOG" id="COG3041">
    <property type="taxonomic scope" value="Bacteria"/>
</dbReference>
<dbReference type="HOGENOM" id="CLU_161929_4_1_6"/>
<dbReference type="OrthoDB" id="7030467at2"/>
<dbReference type="PhylomeDB" id="P44041"/>
<dbReference type="BioCyc" id="HINF71421:G1GJ1-745-MONOMER"/>
<dbReference type="Proteomes" id="UP000000579">
    <property type="component" value="Chromosome"/>
</dbReference>
<dbReference type="GO" id="GO:0004521">
    <property type="term" value="F:RNA endonuclease activity"/>
    <property type="evidence" value="ECO:0000318"/>
    <property type="project" value="GO_Central"/>
</dbReference>
<dbReference type="GO" id="GO:0006402">
    <property type="term" value="P:mRNA catabolic process"/>
    <property type="evidence" value="ECO:0000318"/>
    <property type="project" value="GO_Central"/>
</dbReference>
<dbReference type="GO" id="GO:0006415">
    <property type="term" value="P:translational termination"/>
    <property type="evidence" value="ECO:0000318"/>
    <property type="project" value="GO_Central"/>
</dbReference>
<dbReference type="FunFam" id="3.30.2310.20:FF:000003">
    <property type="entry name" value="Type II toxin-antitoxin system YafQ family toxin"/>
    <property type="match status" value="1"/>
</dbReference>
<dbReference type="Gene3D" id="3.30.2310.20">
    <property type="entry name" value="RelE-like"/>
    <property type="match status" value="1"/>
</dbReference>
<dbReference type="InterPro" id="IPR007712">
    <property type="entry name" value="RelE/ParE_toxin"/>
</dbReference>
<dbReference type="InterPro" id="IPR035093">
    <property type="entry name" value="RelE/ParE_toxin_dom_sf"/>
</dbReference>
<dbReference type="InterPro" id="IPR004386">
    <property type="entry name" value="Toxin_YafQ-like"/>
</dbReference>
<dbReference type="NCBIfam" id="TIGR02385">
    <property type="entry name" value="RelE_StbE"/>
    <property type="match status" value="1"/>
</dbReference>
<dbReference type="NCBIfam" id="TIGR00053">
    <property type="entry name" value="YafQ family addiction module toxin"/>
    <property type="match status" value="1"/>
</dbReference>
<dbReference type="PANTHER" id="PTHR40588">
    <property type="entry name" value="MRNA INTERFERASE TOXIN YAFQ"/>
    <property type="match status" value="1"/>
</dbReference>
<dbReference type="PANTHER" id="PTHR40588:SF1">
    <property type="entry name" value="MRNA INTERFERASE TOXIN YAFQ"/>
    <property type="match status" value="1"/>
</dbReference>
<dbReference type="Pfam" id="PF15738">
    <property type="entry name" value="YafQ_toxin"/>
    <property type="match status" value="1"/>
</dbReference>
<dbReference type="PIRSF" id="PIRSF006156">
    <property type="entry name" value="YafQ"/>
    <property type="match status" value="1"/>
</dbReference>
<dbReference type="SUPFAM" id="SSF143011">
    <property type="entry name" value="RelE-like"/>
    <property type="match status" value="1"/>
</dbReference>
<name>YAFQ_HAEIN</name>
<organism>
    <name type="scientific">Haemophilus influenzae (strain ATCC 51907 / DSM 11121 / KW20 / Rd)</name>
    <dbReference type="NCBI Taxonomy" id="71421"/>
    <lineage>
        <taxon>Bacteria</taxon>
        <taxon>Pseudomonadati</taxon>
        <taxon>Pseudomonadota</taxon>
        <taxon>Gammaproteobacteria</taxon>
        <taxon>Pasteurellales</taxon>
        <taxon>Pasteurellaceae</taxon>
        <taxon>Haemophilus</taxon>
    </lineage>
</organism>
<gene>
    <name evidence="3" type="primary">yafQ</name>
    <name evidence="2" type="synonym">relE</name>
    <name type="ordered locus">HI_0711</name>
</gene>
<reference key="1">
    <citation type="journal article" date="1995" name="Science">
        <title>Whole-genome random sequencing and assembly of Haemophilus influenzae Rd.</title>
        <authorList>
            <person name="Fleischmann R.D."/>
            <person name="Adams M.D."/>
            <person name="White O."/>
            <person name="Clayton R.A."/>
            <person name="Kirkness E.F."/>
            <person name="Kerlavage A.R."/>
            <person name="Bult C.J."/>
            <person name="Tomb J.-F."/>
            <person name="Dougherty B.A."/>
            <person name="Merrick J.M."/>
            <person name="McKenney K."/>
            <person name="Sutton G.G."/>
            <person name="FitzHugh W."/>
            <person name="Fields C.A."/>
            <person name="Gocayne J.D."/>
            <person name="Scott J.D."/>
            <person name="Shirley R."/>
            <person name="Liu L.-I."/>
            <person name="Glodek A."/>
            <person name="Kelley J.M."/>
            <person name="Weidman J.F."/>
            <person name="Phillips C.A."/>
            <person name="Spriggs T."/>
            <person name="Hedblom E."/>
            <person name="Cotton M.D."/>
            <person name="Utterback T.R."/>
            <person name="Hanna M.C."/>
            <person name="Nguyen D.T."/>
            <person name="Saudek D.M."/>
            <person name="Brandon R.C."/>
            <person name="Fine L.D."/>
            <person name="Fritchman J.L."/>
            <person name="Fuhrmann J.L."/>
            <person name="Geoghagen N.S.M."/>
            <person name="Gnehm C.L."/>
            <person name="McDonald L.A."/>
            <person name="Small K.V."/>
            <person name="Fraser C.M."/>
            <person name="Smith H.O."/>
            <person name="Venter J.C."/>
        </authorList>
    </citation>
    <scope>NUCLEOTIDE SEQUENCE [LARGE SCALE GENOMIC DNA]</scope>
    <source>
        <strain>ATCC 51907 / DSM 11121 / KW20 / Rd</strain>
    </source>
</reference>
<reference key="2">
    <citation type="journal article" date="2005" name="Nucleic Acids Res.">
        <title>Toxin-antitoxin loci are highly abundant in free-living but lost from host-associated prokaryotes.</title>
        <authorList>
            <person name="Pandey D.P."/>
            <person name="Gerdes K."/>
        </authorList>
    </citation>
    <scope>POSSIBLE FUNCTION</scope>
    <source>
        <strain>ATCC 51907 / DSM 11121 / KW20 / Rd</strain>
    </source>
</reference>
<proteinExistence type="inferred from homology"/>
<protein>
    <recommendedName>
        <fullName>Putative toxin YafQ</fullName>
    </recommendedName>
</protein>
<sequence>MSEEKPLKVSYSKQFVRDLTDLAKRSPNVLIGSKYITAIHCLLNRLPLPENYQDHALVGEWKGYRDCHIQGDLVLIYQYVIQDEFDELKFSRLNIHSQTALK</sequence>
<comment type="function">
    <text evidence="1">Toxic component of a type II toxin-antitoxin (TA) system. Its cognate antitoxin is RelB (By similarity).</text>
</comment>
<comment type="similarity">
    <text evidence="3">Belongs to the RelE toxin family. YafQ subfamily.</text>
</comment>